<accession>Q94596</accession>
<protein>
    <recommendedName>
        <fullName>Chaperonin HSP60, mitochondrial</fullName>
        <shortName>Protein Cpn60</shortName>
    </recommendedName>
    <alternativeName>
        <fullName>Heat shock protein 60</fullName>
    </alternativeName>
    <alternativeName>
        <fullName>groEL protein</fullName>
    </alternativeName>
</protein>
<sequence length="589" mass="63523">MLSRTVPRCVKYGSTPKDIRYGMEARNALLAGVENLVKAVGVTLGPKGRNVILEMPYACPKITKDGVTVAKSIEFEDSFENLGANLVRQVAGLTNDNAGDGTTTATVLSGAIFKEGFRSVASGTNPMDLKRGIDLACREVLISLAEQSRPVTSKSEITQVAMISANMDQEIGSLIGDAMQQVGKDGVITTQEGRSLNTELELVEGMSFERGYTSPYFVTNTKAQRCELENALVYVANRKLTSVAHILPALNYAIQQKRPLLVIAEDVEGEAMHTFLYNKIQGRISGCAVKAPGFGDMRINQLQDIAVFTGSQMISEDLGLSLDQNDFSERFLGTCRKVTVSRDECILMEGGGSAIAVEERVQMIKDMISAEDHEYNRERLVERLAKLSGGVAVIKVGGASEVEINEKKDRIIDALNATRAAVSEGILAGGGTGLLMASLRLESISKDRRLPPDIRTGVNIVKKAIGLPARYIANNAGVEGSVVAGKVLARKDPSFGYNAQTGEYVNMFEAGIIDPMKVVKSAVVNACSVAGMMITTEAAVVEKDLLGREKRIEDEGMEDKEKKRSVDKLRKQVNEAGRTDAQDGAADEV</sequence>
<reference key="1">
    <citation type="journal article" date="1997" name="Exp. Parasitol.">
        <title>Leishmania major: molecular cloning, sequencing, and expression of the heat shock protein 60 gene reveals unique carboxy terminal peptide sequences.</title>
        <authorList>
            <person name="Rey-Ladino J.A."/>
            <person name="Joshi P.B."/>
            <person name="Singh B."/>
            <person name="Gupta R."/>
            <person name="Reiner N.E."/>
        </authorList>
    </citation>
    <scope>NUCLEOTIDE SEQUENCE [GENOMIC DNA]</scope>
    <source>
        <strain>MHOM/IL/81/Friedlin</strain>
    </source>
</reference>
<dbReference type="EMBL" id="U59320">
    <property type="protein sequence ID" value="AAC13945.1"/>
    <property type="molecule type" value="Genomic_DNA"/>
</dbReference>
<dbReference type="SMR" id="Q94596"/>
<dbReference type="VEuPathDB" id="TriTrypDB:LmjF.32.1850"/>
<dbReference type="VEuPathDB" id="TriTrypDB:LMJFC_320027400"/>
<dbReference type="VEuPathDB" id="TriTrypDB:LMJLV39_320024800"/>
<dbReference type="VEuPathDB" id="TriTrypDB:LMJSD75_320024800"/>
<dbReference type="eggNOG" id="KOG0356">
    <property type="taxonomic scope" value="Eukaryota"/>
</dbReference>
<dbReference type="GO" id="GO:0005759">
    <property type="term" value="C:mitochondrial matrix"/>
    <property type="evidence" value="ECO:0007669"/>
    <property type="project" value="UniProtKB-SubCell"/>
</dbReference>
<dbReference type="GO" id="GO:0005524">
    <property type="term" value="F:ATP binding"/>
    <property type="evidence" value="ECO:0007669"/>
    <property type="project" value="UniProtKB-KW"/>
</dbReference>
<dbReference type="GO" id="GO:0140662">
    <property type="term" value="F:ATP-dependent protein folding chaperone"/>
    <property type="evidence" value="ECO:0007669"/>
    <property type="project" value="InterPro"/>
</dbReference>
<dbReference type="GO" id="GO:0042026">
    <property type="term" value="P:protein refolding"/>
    <property type="evidence" value="ECO:0007669"/>
    <property type="project" value="InterPro"/>
</dbReference>
<dbReference type="CDD" id="cd03344">
    <property type="entry name" value="GroEL"/>
    <property type="match status" value="1"/>
</dbReference>
<dbReference type="FunFam" id="3.50.7.10:FF:000015">
    <property type="entry name" value="Chaperonin HSP60, mitochondrial"/>
    <property type="match status" value="1"/>
</dbReference>
<dbReference type="Gene3D" id="3.50.7.10">
    <property type="entry name" value="GroEL"/>
    <property type="match status" value="1"/>
</dbReference>
<dbReference type="Gene3D" id="1.10.560.10">
    <property type="entry name" value="GroEL-like equatorial domain"/>
    <property type="match status" value="1"/>
</dbReference>
<dbReference type="Gene3D" id="3.30.260.10">
    <property type="entry name" value="TCP-1-like chaperonin intermediate domain"/>
    <property type="match status" value="1"/>
</dbReference>
<dbReference type="HAMAP" id="MF_00600">
    <property type="entry name" value="CH60"/>
    <property type="match status" value="1"/>
</dbReference>
<dbReference type="InterPro" id="IPR001844">
    <property type="entry name" value="Cpn60/GroEL"/>
</dbReference>
<dbReference type="InterPro" id="IPR002423">
    <property type="entry name" value="Cpn60/GroEL/TCP-1"/>
</dbReference>
<dbReference type="InterPro" id="IPR027409">
    <property type="entry name" value="GroEL-like_apical_dom_sf"/>
</dbReference>
<dbReference type="InterPro" id="IPR027413">
    <property type="entry name" value="GROEL-like_equatorial_sf"/>
</dbReference>
<dbReference type="InterPro" id="IPR027410">
    <property type="entry name" value="TCP-1-like_intermed_sf"/>
</dbReference>
<dbReference type="NCBIfam" id="TIGR02348">
    <property type="entry name" value="GroEL"/>
    <property type="match status" value="1"/>
</dbReference>
<dbReference type="NCBIfam" id="NF000592">
    <property type="entry name" value="PRK00013.1"/>
    <property type="match status" value="1"/>
</dbReference>
<dbReference type="NCBIfam" id="NF009487">
    <property type="entry name" value="PRK12849.1"/>
    <property type="match status" value="1"/>
</dbReference>
<dbReference type="NCBIfam" id="NF009488">
    <property type="entry name" value="PRK12850.1"/>
    <property type="match status" value="1"/>
</dbReference>
<dbReference type="NCBIfam" id="NF009489">
    <property type="entry name" value="PRK12851.1"/>
    <property type="match status" value="1"/>
</dbReference>
<dbReference type="PANTHER" id="PTHR45633">
    <property type="entry name" value="60 KDA HEAT SHOCK PROTEIN, MITOCHONDRIAL"/>
    <property type="match status" value="1"/>
</dbReference>
<dbReference type="Pfam" id="PF00118">
    <property type="entry name" value="Cpn60_TCP1"/>
    <property type="match status" value="1"/>
</dbReference>
<dbReference type="PRINTS" id="PR00298">
    <property type="entry name" value="CHAPERONIN60"/>
</dbReference>
<dbReference type="SUPFAM" id="SSF52029">
    <property type="entry name" value="GroEL apical domain-like"/>
    <property type="match status" value="1"/>
</dbReference>
<dbReference type="SUPFAM" id="SSF48592">
    <property type="entry name" value="GroEL equatorial domain-like"/>
    <property type="match status" value="1"/>
</dbReference>
<dbReference type="SUPFAM" id="SSF54849">
    <property type="entry name" value="GroEL-intermediate domain like"/>
    <property type="match status" value="1"/>
</dbReference>
<proteinExistence type="inferred from homology"/>
<evidence type="ECO:0000250" key="1"/>
<evidence type="ECO:0000256" key="2">
    <source>
        <dbReference type="SAM" id="MobiDB-lite"/>
    </source>
</evidence>
<evidence type="ECO:0000305" key="3"/>
<comment type="function">
    <text evidence="1">Implicated in mitochondrial protein import and macromolecular assembly. May facilitate the correct folding of imported proteins. May also prevent misfolding and promote the refolding and proper assembly of unfolded polypeptides generated under stress conditions in the mitochondrial matrix (By similarity).</text>
</comment>
<comment type="subcellular location">
    <subcellularLocation>
        <location evidence="1">Mitochondrion matrix</location>
    </subcellularLocation>
</comment>
<comment type="induction">
    <text evidence="1">By heat shock.</text>
</comment>
<comment type="similarity">
    <text evidence="3">Belongs to the chaperonin (HSP60) family.</text>
</comment>
<keyword id="KW-0067">ATP-binding</keyword>
<keyword id="KW-0143">Chaperone</keyword>
<keyword id="KW-0496">Mitochondrion</keyword>
<keyword id="KW-0547">Nucleotide-binding</keyword>
<keyword id="KW-0346">Stress response</keyword>
<keyword id="KW-0809">Transit peptide</keyword>
<name>CH60_LEIMA</name>
<gene>
    <name type="primary">HSP60</name>
</gene>
<feature type="transit peptide" description="Mitochondrion" evidence="1">
    <location>
        <begin position="1"/>
        <end status="unknown"/>
    </location>
</feature>
<feature type="chain" id="PRO_0000005035" description="Chaperonin HSP60, mitochondrial" evidence="1">
    <location>
        <begin status="unknown"/>
        <end position="589"/>
    </location>
</feature>
<feature type="region of interest" description="Disordered" evidence="2">
    <location>
        <begin position="550"/>
        <end position="589"/>
    </location>
</feature>
<feature type="compositionally biased region" description="Basic and acidic residues" evidence="2">
    <location>
        <begin position="550"/>
        <end position="581"/>
    </location>
</feature>
<organism>
    <name type="scientific">Leishmania major</name>
    <dbReference type="NCBI Taxonomy" id="5664"/>
    <lineage>
        <taxon>Eukaryota</taxon>
        <taxon>Discoba</taxon>
        <taxon>Euglenozoa</taxon>
        <taxon>Kinetoplastea</taxon>
        <taxon>Metakinetoplastina</taxon>
        <taxon>Trypanosomatida</taxon>
        <taxon>Trypanosomatidae</taxon>
        <taxon>Leishmaniinae</taxon>
        <taxon>Leishmania</taxon>
    </lineage>
</organism>